<keyword id="KW-0131">Cell cycle</keyword>
<keyword id="KW-0132">Cell division</keyword>
<keyword id="KW-0137">Centromere</keyword>
<keyword id="KW-0158">Chromosome</keyword>
<keyword id="KW-0159">Chromosome partition</keyword>
<keyword id="KW-0963">Cytoplasm</keyword>
<keyword id="KW-0206">Cytoskeleton</keyword>
<keyword id="KW-0995">Kinetochore</keyword>
<keyword id="KW-0493">Microtubule</keyword>
<keyword id="KW-0498">Mitosis</keyword>
<keyword id="KW-0539">Nucleus</keyword>
<keyword id="KW-1185">Reference proteome</keyword>
<organism>
    <name type="scientific">Schizosaccharomyces pombe (strain 972 / ATCC 24843)</name>
    <name type="common">Fission yeast</name>
    <dbReference type="NCBI Taxonomy" id="284812"/>
    <lineage>
        <taxon>Eukaryota</taxon>
        <taxon>Fungi</taxon>
        <taxon>Dikarya</taxon>
        <taxon>Ascomycota</taxon>
        <taxon>Taphrinomycotina</taxon>
        <taxon>Schizosaccharomycetes</taxon>
        <taxon>Schizosaccharomycetales</taxon>
        <taxon>Schizosaccharomycetaceae</taxon>
        <taxon>Schizosaccharomyces</taxon>
    </lineage>
</organism>
<feature type="chain" id="PRO_0000290641" description="Inner kinetochore subunit fta6">
    <location>
        <begin position="1"/>
        <end position="59"/>
    </location>
</feature>
<evidence type="ECO:0000269" key="1">
    <source>
    </source>
</evidence>
<evidence type="ECO:0000269" key="2">
    <source>
    </source>
</evidence>
<comment type="function">
    <text evidence="1">Component of the kinetochore, a multiprotein complex that assembles on centromeric DNA and attaches chromosomes to spindle microtubules, mediating chromosome segregation and sister chromatid segregation during meiosis and mitosis. Component of the inner kinetochore constitutive centromere-associated network (CCAN), which serves as a structural platform for outer kinetochore assembly.</text>
</comment>
<comment type="subunit">
    <text evidence="1">Component of the inner kinetochore constitutive centromere-associated network (CCAN) (also known as central kinetochore Sim4 complex in fission yeast), which is composed of at least cnl2, cnp3, cnp20, fta1, fta2, fta3, fta4, fta6, fta7, mal2, mhf1, mhf2, mis6, mis15, mis17, sim4 and wip1.</text>
</comment>
<comment type="subcellular location">
    <subcellularLocation>
        <location evidence="2">Nucleus</location>
    </subcellularLocation>
    <subcellularLocation>
        <location evidence="2">Chromosome</location>
        <location evidence="2">Centromere</location>
        <location evidence="2">Kinetochore</location>
    </subcellularLocation>
    <subcellularLocation>
        <location evidence="2">Cytoplasm</location>
        <location evidence="2">Cytoskeleton</location>
        <location evidence="2">Microtubule organizing center</location>
        <location evidence="2">Spindle pole body</location>
    </subcellularLocation>
</comment>
<name>FTA6_SCHPO</name>
<gene>
    <name type="primary">fta6</name>
    <name type="synonym">sma6</name>
    <name type="ORF">SPAC11H11.05c</name>
</gene>
<proteinExistence type="evidence at protein level"/>
<dbReference type="EMBL" id="CU329670">
    <property type="protein sequence ID" value="CAB59801.1"/>
    <property type="molecule type" value="Genomic_DNA"/>
</dbReference>
<dbReference type="PIR" id="T37554">
    <property type="entry name" value="T37554"/>
</dbReference>
<dbReference type="RefSeq" id="NP_594723.1">
    <property type="nucleotide sequence ID" value="NM_001020151.1"/>
</dbReference>
<dbReference type="SMR" id="Q9UTP3"/>
<dbReference type="BioGRID" id="279100">
    <property type="interactions" value="46"/>
</dbReference>
<dbReference type="STRING" id="284812.Q9UTP3"/>
<dbReference type="PaxDb" id="4896-SPAC11H11.05c.1"/>
<dbReference type="EnsemblFungi" id="SPAC11H11.05c.1">
    <property type="protein sequence ID" value="SPAC11H11.05c.1:pep"/>
    <property type="gene ID" value="SPAC11H11.05c"/>
</dbReference>
<dbReference type="GeneID" id="2542646"/>
<dbReference type="KEGG" id="spo:2542646"/>
<dbReference type="PomBase" id="SPAC11H11.05c">
    <property type="gene designation" value="fta6"/>
</dbReference>
<dbReference type="VEuPathDB" id="FungiDB:SPAC11H11.05c"/>
<dbReference type="HOGENOM" id="CLU_2962172_0_0_1"/>
<dbReference type="InParanoid" id="Q9UTP3"/>
<dbReference type="PRO" id="PR:Q9UTP3"/>
<dbReference type="Proteomes" id="UP000002485">
    <property type="component" value="Chromosome I"/>
</dbReference>
<dbReference type="GO" id="GO:0005829">
    <property type="term" value="C:cytosol"/>
    <property type="evidence" value="ECO:0007005"/>
    <property type="project" value="PomBase"/>
</dbReference>
<dbReference type="GO" id="GO:0000776">
    <property type="term" value="C:kinetochore"/>
    <property type="evidence" value="ECO:0000314"/>
    <property type="project" value="PomBase"/>
</dbReference>
<dbReference type="GO" id="GO:0005874">
    <property type="term" value="C:microtubule"/>
    <property type="evidence" value="ECO:0007669"/>
    <property type="project" value="UniProtKB-KW"/>
</dbReference>
<dbReference type="GO" id="GO:0031511">
    <property type="term" value="C:Mis6-Sim4 complex"/>
    <property type="evidence" value="ECO:0000314"/>
    <property type="project" value="PomBase"/>
</dbReference>
<dbReference type="GO" id="GO:0005634">
    <property type="term" value="C:nucleus"/>
    <property type="evidence" value="ECO:0007005"/>
    <property type="project" value="PomBase"/>
</dbReference>
<dbReference type="GO" id="GO:0005816">
    <property type="term" value="C:spindle pole body"/>
    <property type="evidence" value="ECO:0007669"/>
    <property type="project" value="UniProtKB-SubCell"/>
</dbReference>
<dbReference type="GO" id="GO:0051301">
    <property type="term" value="P:cell division"/>
    <property type="evidence" value="ECO:0007669"/>
    <property type="project" value="UniProtKB-KW"/>
</dbReference>
<dbReference type="GO" id="GO:0000070">
    <property type="term" value="P:mitotic sister chromatid segregation"/>
    <property type="evidence" value="ECO:0000305"/>
    <property type="project" value="PomBase"/>
</dbReference>
<protein>
    <recommendedName>
        <fullName>Inner kinetochore subunit fta6</fullName>
    </recommendedName>
    <alternativeName>
        <fullName>Constitutive centromere-associated network protein fta6</fullName>
    </alternativeName>
    <alternativeName>
        <fullName>Sim4 complex subunit fta6</fullName>
    </alternativeName>
    <alternativeName>
        <fullName>Sim4-mal2-associated protein 6</fullName>
    </alternativeName>
</protein>
<reference key="1">
    <citation type="journal article" date="2002" name="Nature">
        <title>The genome sequence of Schizosaccharomyces pombe.</title>
        <authorList>
            <person name="Wood V."/>
            <person name="Gwilliam R."/>
            <person name="Rajandream M.A."/>
            <person name="Lyne M.H."/>
            <person name="Lyne R."/>
            <person name="Stewart A."/>
            <person name="Sgouros J.G."/>
            <person name="Peat N."/>
            <person name="Hayles J."/>
            <person name="Baker S.G."/>
            <person name="Basham D."/>
            <person name="Bowman S."/>
            <person name="Brooks K."/>
            <person name="Brown D."/>
            <person name="Brown S."/>
            <person name="Chillingworth T."/>
            <person name="Churcher C.M."/>
            <person name="Collins M."/>
            <person name="Connor R."/>
            <person name="Cronin A."/>
            <person name="Davis P."/>
            <person name="Feltwell T."/>
            <person name="Fraser A."/>
            <person name="Gentles S."/>
            <person name="Goble A."/>
            <person name="Hamlin N."/>
            <person name="Harris D.E."/>
            <person name="Hidalgo J."/>
            <person name="Hodgson G."/>
            <person name="Holroyd S."/>
            <person name="Hornsby T."/>
            <person name="Howarth S."/>
            <person name="Huckle E.J."/>
            <person name="Hunt S."/>
            <person name="Jagels K."/>
            <person name="James K.D."/>
            <person name="Jones L."/>
            <person name="Jones M."/>
            <person name="Leather S."/>
            <person name="McDonald S."/>
            <person name="McLean J."/>
            <person name="Mooney P."/>
            <person name="Moule S."/>
            <person name="Mungall K.L."/>
            <person name="Murphy L.D."/>
            <person name="Niblett D."/>
            <person name="Odell C."/>
            <person name="Oliver K."/>
            <person name="O'Neil S."/>
            <person name="Pearson D."/>
            <person name="Quail M.A."/>
            <person name="Rabbinowitsch E."/>
            <person name="Rutherford K.M."/>
            <person name="Rutter S."/>
            <person name="Saunders D."/>
            <person name="Seeger K."/>
            <person name="Sharp S."/>
            <person name="Skelton J."/>
            <person name="Simmonds M.N."/>
            <person name="Squares R."/>
            <person name="Squares S."/>
            <person name="Stevens K."/>
            <person name="Taylor K."/>
            <person name="Taylor R.G."/>
            <person name="Tivey A."/>
            <person name="Walsh S.V."/>
            <person name="Warren T."/>
            <person name="Whitehead S."/>
            <person name="Woodward J.R."/>
            <person name="Volckaert G."/>
            <person name="Aert R."/>
            <person name="Robben J."/>
            <person name="Grymonprez B."/>
            <person name="Weltjens I."/>
            <person name="Vanstreels E."/>
            <person name="Rieger M."/>
            <person name="Schaefer M."/>
            <person name="Mueller-Auer S."/>
            <person name="Gabel C."/>
            <person name="Fuchs M."/>
            <person name="Duesterhoeft A."/>
            <person name="Fritzc C."/>
            <person name="Holzer E."/>
            <person name="Moestl D."/>
            <person name="Hilbert H."/>
            <person name="Borzym K."/>
            <person name="Langer I."/>
            <person name="Beck A."/>
            <person name="Lehrach H."/>
            <person name="Reinhardt R."/>
            <person name="Pohl T.M."/>
            <person name="Eger P."/>
            <person name="Zimmermann W."/>
            <person name="Wedler H."/>
            <person name="Wambutt R."/>
            <person name="Purnelle B."/>
            <person name="Goffeau A."/>
            <person name="Cadieu E."/>
            <person name="Dreano S."/>
            <person name="Gloux S."/>
            <person name="Lelaure V."/>
            <person name="Mottier S."/>
            <person name="Galibert F."/>
            <person name="Aves S.J."/>
            <person name="Xiang Z."/>
            <person name="Hunt C."/>
            <person name="Moore K."/>
            <person name="Hurst S.M."/>
            <person name="Lucas M."/>
            <person name="Rochet M."/>
            <person name="Gaillardin C."/>
            <person name="Tallada V.A."/>
            <person name="Garzon A."/>
            <person name="Thode G."/>
            <person name="Daga R.R."/>
            <person name="Cruzado L."/>
            <person name="Jimenez J."/>
            <person name="Sanchez M."/>
            <person name="del Rey F."/>
            <person name="Benito J."/>
            <person name="Dominguez A."/>
            <person name="Revuelta J.L."/>
            <person name="Moreno S."/>
            <person name="Armstrong J."/>
            <person name="Forsburg S.L."/>
            <person name="Cerutti L."/>
            <person name="Lowe T."/>
            <person name="McCombie W.R."/>
            <person name="Paulsen I."/>
            <person name="Potashkin J."/>
            <person name="Shpakovski G.V."/>
            <person name="Ussery D."/>
            <person name="Barrell B.G."/>
            <person name="Nurse P."/>
        </authorList>
    </citation>
    <scope>NUCLEOTIDE SEQUENCE [LARGE SCALE GENOMIC DNA]</scope>
    <source>
        <strain>972 / ATCC 24843</strain>
    </source>
</reference>
<reference key="2">
    <citation type="journal article" date="2005" name="EMBO J.">
        <title>Molecular analysis of kinetochore architecture in fission yeast.</title>
        <authorList>
            <person name="Liu X."/>
            <person name="McLeod I."/>
            <person name="Anderson S."/>
            <person name="Yates J.R. III"/>
            <person name="He X."/>
        </authorList>
    </citation>
    <scope>FUNCTION</scope>
    <scope>IDENTIFICATION IN THE SIM4 COMPLEX</scope>
</reference>
<reference key="3">
    <citation type="journal article" date="2006" name="Nat. Biotechnol.">
        <title>ORFeome cloning and global analysis of protein localization in the fission yeast Schizosaccharomyces pombe.</title>
        <authorList>
            <person name="Matsuyama A."/>
            <person name="Arai R."/>
            <person name="Yashiroda Y."/>
            <person name="Shirai A."/>
            <person name="Kamata A."/>
            <person name="Sekido S."/>
            <person name="Kobayashi Y."/>
            <person name="Hashimoto A."/>
            <person name="Hamamoto M."/>
            <person name="Hiraoka Y."/>
            <person name="Horinouchi S."/>
            <person name="Yoshida M."/>
        </authorList>
    </citation>
    <scope>SUBCELLULAR LOCATION [LARGE SCALE ANALYSIS]</scope>
</reference>
<accession>Q9UTP3</accession>
<sequence length="59" mass="6739">MEDKYILLSAVETFKSRLEELLMQSAKVQKQTMLRKELASSMNDMASTVQEALNKKKSS</sequence>